<feature type="chain" id="PRO_1000096118" description="Elongation factor P">
    <location>
        <begin position="1"/>
        <end position="188"/>
    </location>
</feature>
<feature type="modified residue" description="N6-(3,6-diaminohexanoyl)-5-hydroxylysine" evidence="1">
    <location>
        <position position="34"/>
    </location>
</feature>
<gene>
    <name evidence="1" type="primary">efp</name>
    <name type="ordered locus">APP7_0718</name>
</gene>
<dbReference type="EMBL" id="CP001091">
    <property type="protein sequence ID" value="ACE61370.1"/>
    <property type="molecule type" value="Genomic_DNA"/>
</dbReference>
<dbReference type="RefSeq" id="WP_005600860.1">
    <property type="nucleotide sequence ID" value="NC_010939.1"/>
</dbReference>
<dbReference type="SMR" id="B3H1A1"/>
<dbReference type="GeneID" id="48598859"/>
<dbReference type="KEGG" id="apa:APP7_0718"/>
<dbReference type="HOGENOM" id="CLU_074944_0_0_6"/>
<dbReference type="UniPathway" id="UPA00345"/>
<dbReference type="Proteomes" id="UP000001226">
    <property type="component" value="Chromosome"/>
</dbReference>
<dbReference type="GO" id="GO:0005737">
    <property type="term" value="C:cytoplasm"/>
    <property type="evidence" value="ECO:0007669"/>
    <property type="project" value="UniProtKB-SubCell"/>
</dbReference>
<dbReference type="GO" id="GO:0003746">
    <property type="term" value="F:translation elongation factor activity"/>
    <property type="evidence" value="ECO:0007669"/>
    <property type="project" value="UniProtKB-UniRule"/>
</dbReference>
<dbReference type="GO" id="GO:0043043">
    <property type="term" value="P:peptide biosynthetic process"/>
    <property type="evidence" value="ECO:0007669"/>
    <property type="project" value="InterPro"/>
</dbReference>
<dbReference type="CDD" id="cd04470">
    <property type="entry name" value="S1_EF-P_repeat_1"/>
    <property type="match status" value="1"/>
</dbReference>
<dbReference type="CDD" id="cd05794">
    <property type="entry name" value="S1_EF-P_repeat_2"/>
    <property type="match status" value="1"/>
</dbReference>
<dbReference type="FunFam" id="2.30.30.30:FF:000003">
    <property type="entry name" value="Elongation factor P"/>
    <property type="match status" value="1"/>
</dbReference>
<dbReference type="FunFam" id="2.40.50.140:FF:000004">
    <property type="entry name" value="Elongation factor P"/>
    <property type="match status" value="1"/>
</dbReference>
<dbReference type="FunFam" id="2.40.50.140:FF:000009">
    <property type="entry name" value="Elongation factor P"/>
    <property type="match status" value="1"/>
</dbReference>
<dbReference type="Gene3D" id="2.30.30.30">
    <property type="match status" value="1"/>
</dbReference>
<dbReference type="Gene3D" id="2.40.50.140">
    <property type="entry name" value="Nucleic acid-binding proteins"/>
    <property type="match status" value="2"/>
</dbReference>
<dbReference type="HAMAP" id="MF_00141">
    <property type="entry name" value="EF_P"/>
    <property type="match status" value="1"/>
</dbReference>
<dbReference type="InterPro" id="IPR015365">
    <property type="entry name" value="Elong-fact-P_C"/>
</dbReference>
<dbReference type="InterPro" id="IPR012340">
    <property type="entry name" value="NA-bd_OB-fold"/>
</dbReference>
<dbReference type="InterPro" id="IPR014722">
    <property type="entry name" value="Rib_uL2_dom2"/>
</dbReference>
<dbReference type="InterPro" id="IPR020599">
    <property type="entry name" value="Transl_elong_fac_P/YeiP"/>
</dbReference>
<dbReference type="InterPro" id="IPR013185">
    <property type="entry name" value="Transl_elong_KOW-like"/>
</dbReference>
<dbReference type="InterPro" id="IPR001059">
    <property type="entry name" value="Transl_elong_P/YeiP_cen"/>
</dbReference>
<dbReference type="InterPro" id="IPR013852">
    <property type="entry name" value="Transl_elong_P/YeiP_CS"/>
</dbReference>
<dbReference type="InterPro" id="IPR011768">
    <property type="entry name" value="Transl_elongation_fac_P"/>
</dbReference>
<dbReference type="InterPro" id="IPR008991">
    <property type="entry name" value="Translation_prot_SH3-like_sf"/>
</dbReference>
<dbReference type="NCBIfam" id="TIGR00038">
    <property type="entry name" value="efp"/>
    <property type="match status" value="1"/>
</dbReference>
<dbReference type="NCBIfam" id="NF001810">
    <property type="entry name" value="PRK00529.1"/>
    <property type="match status" value="1"/>
</dbReference>
<dbReference type="PANTHER" id="PTHR30053">
    <property type="entry name" value="ELONGATION FACTOR P"/>
    <property type="match status" value="1"/>
</dbReference>
<dbReference type="PANTHER" id="PTHR30053:SF12">
    <property type="entry name" value="ELONGATION FACTOR P (EF-P) FAMILY PROTEIN"/>
    <property type="match status" value="1"/>
</dbReference>
<dbReference type="Pfam" id="PF01132">
    <property type="entry name" value="EFP"/>
    <property type="match status" value="1"/>
</dbReference>
<dbReference type="Pfam" id="PF08207">
    <property type="entry name" value="EFP_N"/>
    <property type="match status" value="1"/>
</dbReference>
<dbReference type="Pfam" id="PF09285">
    <property type="entry name" value="Elong-fact-P_C"/>
    <property type="match status" value="1"/>
</dbReference>
<dbReference type="PIRSF" id="PIRSF005901">
    <property type="entry name" value="EF-P"/>
    <property type="match status" value="1"/>
</dbReference>
<dbReference type="SMART" id="SM01185">
    <property type="entry name" value="EFP"/>
    <property type="match status" value="1"/>
</dbReference>
<dbReference type="SMART" id="SM00841">
    <property type="entry name" value="Elong-fact-P_C"/>
    <property type="match status" value="1"/>
</dbReference>
<dbReference type="SUPFAM" id="SSF50249">
    <property type="entry name" value="Nucleic acid-binding proteins"/>
    <property type="match status" value="2"/>
</dbReference>
<dbReference type="SUPFAM" id="SSF50104">
    <property type="entry name" value="Translation proteins SH3-like domain"/>
    <property type="match status" value="1"/>
</dbReference>
<dbReference type="PROSITE" id="PS01275">
    <property type="entry name" value="EFP"/>
    <property type="match status" value="1"/>
</dbReference>
<comment type="function">
    <text evidence="1">Involved in peptide bond synthesis. Alleviates ribosome stalling that occurs when 3 or more consecutive Pro residues or the sequence PPG is present in a protein, possibly by augmenting the peptidyl transferase activity of the ribosome. Modification of Lys-34 is required for alleviation.</text>
</comment>
<comment type="pathway">
    <text evidence="1">Protein biosynthesis; polypeptide chain elongation.</text>
</comment>
<comment type="subcellular location">
    <subcellularLocation>
        <location evidence="1">Cytoplasm</location>
    </subcellularLocation>
</comment>
<comment type="PTM">
    <text evidence="1">May be beta-lysylated on the epsilon-amino group of Lys-34 by the combined action of EpmA and EpmB, and then hydroxylated on the C5 position of the same residue by EpmC (if this protein is present). Lysylation is critical for the stimulatory effect of EF-P on peptide-bond formation. The lysylation moiety may extend toward the peptidyltransferase center and stabilize the terminal 3-CCA end of the tRNA. Hydroxylation of the C5 position on Lys-34 may allow additional potential stabilizing hydrogen-bond interactions with the P-tRNA.</text>
</comment>
<comment type="similarity">
    <text evidence="1">Belongs to the elongation factor P family.</text>
</comment>
<sequence length="188" mass="20816">MASYSTNDFKPGLKFIQDGEPCVIVENEFVKPGKGQAFTRTKIRKLISGKVLEINFKSGTSVEAADVVDYNYTYSYKDEDFWYFMHPETFEQISVDEKALGDNDKWLVDQAECIITLWNGSAISVTPPNFVELEVVETDPGLKGDTAGTGGKPATLSTGAVVRVPLFVQIGEVIRVDTRSGEYVSRVK</sequence>
<proteinExistence type="inferred from homology"/>
<accession>B3H1A1</accession>
<evidence type="ECO:0000255" key="1">
    <source>
        <dbReference type="HAMAP-Rule" id="MF_00141"/>
    </source>
</evidence>
<name>EFP_ACTP7</name>
<protein>
    <recommendedName>
        <fullName evidence="1">Elongation factor P</fullName>
        <shortName evidence="1">EF-P</shortName>
    </recommendedName>
</protein>
<organism>
    <name type="scientific">Actinobacillus pleuropneumoniae serotype 7 (strain AP76)</name>
    <dbReference type="NCBI Taxonomy" id="537457"/>
    <lineage>
        <taxon>Bacteria</taxon>
        <taxon>Pseudomonadati</taxon>
        <taxon>Pseudomonadota</taxon>
        <taxon>Gammaproteobacteria</taxon>
        <taxon>Pasteurellales</taxon>
        <taxon>Pasteurellaceae</taxon>
        <taxon>Actinobacillus</taxon>
    </lineage>
</organism>
<reference key="1">
    <citation type="submission" date="2008-06" db="EMBL/GenBank/DDBJ databases">
        <title>Genome and proteome analysis of A. pleuropneumoniae serotype 7.</title>
        <authorList>
            <person name="Linke B."/>
            <person name="Buettner F."/>
            <person name="Martinez-Arias R."/>
            <person name="Goesmann A."/>
            <person name="Baltes N."/>
            <person name="Tegetmeyer H."/>
            <person name="Singh M."/>
            <person name="Gerlach G.F."/>
        </authorList>
    </citation>
    <scope>NUCLEOTIDE SEQUENCE [LARGE SCALE GENOMIC DNA]</scope>
    <source>
        <strain>AP76</strain>
    </source>
</reference>
<keyword id="KW-0963">Cytoplasm</keyword>
<keyword id="KW-0251">Elongation factor</keyword>
<keyword id="KW-0379">Hydroxylation</keyword>
<keyword id="KW-0648">Protein biosynthesis</keyword>